<gene>
    <name evidence="1" type="primary">leuC</name>
    <name type="ordered locus">AM1_4505</name>
</gene>
<keyword id="KW-0004">4Fe-4S</keyword>
<keyword id="KW-0028">Amino-acid biosynthesis</keyword>
<keyword id="KW-0100">Branched-chain amino acid biosynthesis</keyword>
<keyword id="KW-0408">Iron</keyword>
<keyword id="KW-0411">Iron-sulfur</keyword>
<keyword id="KW-0432">Leucine biosynthesis</keyword>
<keyword id="KW-0456">Lyase</keyword>
<keyword id="KW-0479">Metal-binding</keyword>
<keyword id="KW-1185">Reference proteome</keyword>
<feature type="chain" id="PRO_1000084207" description="3-isopropylmalate dehydratase large subunit">
    <location>
        <begin position="1"/>
        <end position="471"/>
    </location>
</feature>
<feature type="binding site" evidence="1">
    <location>
        <position position="347"/>
    </location>
    <ligand>
        <name>[4Fe-4S] cluster</name>
        <dbReference type="ChEBI" id="CHEBI:49883"/>
    </ligand>
</feature>
<feature type="binding site" evidence="1">
    <location>
        <position position="407"/>
    </location>
    <ligand>
        <name>[4Fe-4S] cluster</name>
        <dbReference type="ChEBI" id="CHEBI:49883"/>
    </ligand>
</feature>
<feature type="binding site" evidence="1">
    <location>
        <position position="410"/>
    </location>
    <ligand>
        <name>[4Fe-4S] cluster</name>
        <dbReference type="ChEBI" id="CHEBI:49883"/>
    </ligand>
</feature>
<evidence type="ECO:0000255" key="1">
    <source>
        <dbReference type="HAMAP-Rule" id="MF_01026"/>
    </source>
</evidence>
<sequence length="471" mass="50683">MSQGTLFDKVWDLHTVDVLPSGQTQLFIGLHLIHEVTSPQAFTMLKDRGLNVLYPQRTVATVDHIVPTENQARPFADTLAEEMMQALEQSCQDHGITFHNIGSGKQGIVHVIAPEQGLTQPGMTIACGDSHTSTHGAFGAISFGIGTSQVRDVLASQTLALAKLKVRKVEVNGTLPAGVYAKDVILHIIRTLGVKGGVGYAYEFAGTTFEQMTMDERMTVCNMSIEGGARCGYVNPDTITFEYLKGREAAPKGADWDQAVAWWQSIRSDADAVYDDVVVFDAQDISPTVTWGITPGQGIGIDEAIPGLDHFTDADQPIASEAYKYMDLQPGQPIQGTKVDVCFIGSCTNGRISDLREAAQFAKGNQVAAGVKAFVVPGSEQVKQQAESEGLHHIFEQAGFEWREPGCSMCLAMNPDKLQGRQLSASSSNRNFKGRQGSASGRTLLMSPAMVVAAAIKGEVADVRQIPKASP</sequence>
<proteinExistence type="inferred from homology"/>
<comment type="function">
    <text evidence="1">Catalyzes the isomerization between 2-isopropylmalate and 3-isopropylmalate, via the formation of 2-isopropylmaleate.</text>
</comment>
<comment type="catalytic activity">
    <reaction evidence="1">
        <text>(2R,3S)-3-isopropylmalate = (2S)-2-isopropylmalate</text>
        <dbReference type="Rhea" id="RHEA:32287"/>
        <dbReference type="ChEBI" id="CHEBI:1178"/>
        <dbReference type="ChEBI" id="CHEBI:35121"/>
        <dbReference type="EC" id="4.2.1.33"/>
    </reaction>
</comment>
<comment type="cofactor">
    <cofactor evidence="1">
        <name>[4Fe-4S] cluster</name>
        <dbReference type="ChEBI" id="CHEBI:49883"/>
    </cofactor>
    <text evidence="1">Binds 1 [4Fe-4S] cluster per subunit.</text>
</comment>
<comment type="pathway">
    <text evidence="1">Amino-acid biosynthesis; L-leucine biosynthesis; L-leucine from 3-methyl-2-oxobutanoate: step 2/4.</text>
</comment>
<comment type="subunit">
    <text evidence="1">Heterodimer of LeuC and LeuD.</text>
</comment>
<comment type="similarity">
    <text evidence="1">Belongs to the aconitase/IPM isomerase family. LeuC type 1 subfamily.</text>
</comment>
<protein>
    <recommendedName>
        <fullName evidence="1">3-isopropylmalate dehydratase large subunit</fullName>
        <ecNumber evidence="1">4.2.1.33</ecNumber>
    </recommendedName>
    <alternativeName>
        <fullName evidence="1">Alpha-IPM isomerase</fullName>
        <shortName evidence="1">IPMI</shortName>
    </alternativeName>
    <alternativeName>
        <fullName evidence="1">Isopropylmalate isomerase</fullName>
    </alternativeName>
</protein>
<dbReference type="EC" id="4.2.1.33" evidence="1"/>
<dbReference type="EMBL" id="CP000828">
    <property type="protein sequence ID" value="ABW29482.1"/>
    <property type="molecule type" value="Genomic_DNA"/>
</dbReference>
<dbReference type="RefSeq" id="WP_012164795.1">
    <property type="nucleotide sequence ID" value="NC_009925.1"/>
</dbReference>
<dbReference type="SMR" id="B0CG35"/>
<dbReference type="STRING" id="329726.AM1_4505"/>
<dbReference type="KEGG" id="amr:AM1_4505"/>
<dbReference type="eggNOG" id="COG0065">
    <property type="taxonomic scope" value="Bacteria"/>
</dbReference>
<dbReference type="HOGENOM" id="CLU_006714_3_4_3"/>
<dbReference type="OrthoDB" id="9802769at2"/>
<dbReference type="UniPathway" id="UPA00048">
    <property type="reaction ID" value="UER00071"/>
</dbReference>
<dbReference type="Proteomes" id="UP000000268">
    <property type="component" value="Chromosome"/>
</dbReference>
<dbReference type="GO" id="GO:0003861">
    <property type="term" value="F:3-isopropylmalate dehydratase activity"/>
    <property type="evidence" value="ECO:0007669"/>
    <property type="project" value="UniProtKB-UniRule"/>
</dbReference>
<dbReference type="GO" id="GO:0051539">
    <property type="term" value="F:4 iron, 4 sulfur cluster binding"/>
    <property type="evidence" value="ECO:0007669"/>
    <property type="project" value="UniProtKB-KW"/>
</dbReference>
<dbReference type="GO" id="GO:0046872">
    <property type="term" value="F:metal ion binding"/>
    <property type="evidence" value="ECO:0007669"/>
    <property type="project" value="UniProtKB-KW"/>
</dbReference>
<dbReference type="GO" id="GO:0009098">
    <property type="term" value="P:L-leucine biosynthetic process"/>
    <property type="evidence" value="ECO:0007669"/>
    <property type="project" value="UniProtKB-UniRule"/>
</dbReference>
<dbReference type="CDD" id="cd01583">
    <property type="entry name" value="IPMI"/>
    <property type="match status" value="1"/>
</dbReference>
<dbReference type="Gene3D" id="3.30.499.10">
    <property type="entry name" value="Aconitase, domain 3"/>
    <property type="match status" value="2"/>
</dbReference>
<dbReference type="HAMAP" id="MF_01026">
    <property type="entry name" value="LeuC_type1"/>
    <property type="match status" value="1"/>
</dbReference>
<dbReference type="InterPro" id="IPR004430">
    <property type="entry name" value="3-IsopropMal_deHydase_lsu"/>
</dbReference>
<dbReference type="InterPro" id="IPR015931">
    <property type="entry name" value="Acnase/IPM_dHydase_lsu_aba_1/3"/>
</dbReference>
<dbReference type="InterPro" id="IPR001030">
    <property type="entry name" value="Acoase/IPM_deHydtase_lsu_aba"/>
</dbReference>
<dbReference type="InterPro" id="IPR018136">
    <property type="entry name" value="Aconitase_4Fe-4S_BS"/>
</dbReference>
<dbReference type="InterPro" id="IPR036008">
    <property type="entry name" value="Aconitase_4Fe-4S_dom"/>
</dbReference>
<dbReference type="InterPro" id="IPR050067">
    <property type="entry name" value="IPM_dehydratase_rel_enz"/>
</dbReference>
<dbReference type="InterPro" id="IPR033941">
    <property type="entry name" value="IPMI_cat"/>
</dbReference>
<dbReference type="NCBIfam" id="TIGR00170">
    <property type="entry name" value="leuC"/>
    <property type="match status" value="1"/>
</dbReference>
<dbReference type="NCBIfam" id="NF004016">
    <property type="entry name" value="PRK05478.1"/>
    <property type="match status" value="1"/>
</dbReference>
<dbReference type="NCBIfam" id="NF009116">
    <property type="entry name" value="PRK12466.1"/>
    <property type="match status" value="1"/>
</dbReference>
<dbReference type="PANTHER" id="PTHR43822:SF9">
    <property type="entry name" value="3-ISOPROPYLMALATE DEHYDRATASE"/>
    <property type="match status" value="1"/>
</dbReference>
<dbReference type="PANTHER" id="PTHR43822">
    <property type="entry name" value="HOMOACONITASE, MITOCHONDRIAL-RELATED"/>
    <property type="match status" value="1"/>
</dbReference>
<dbReference type="Pfam" id="PF00330">
    <property type="entry name" value="Aconitase"/>
    <property type="match status" value="1"/>
</dbReference>
<dbReference type="PRINTS" id="PR00415">
    <property type="entry name" value="ACONITASE"/>
</dbReference>
<dbReference type="SUPFAM" id="SSF53732">
    <property type="entry name" value="Aconitase iron-sulfur domain"/>
    <property type="match status" value="1"/>
</dbReference>
<dbReference type="PROSITE" id="PS00450">
    <property type="entry name" value="ACONITASE_1"/>
    <property type="match status" value="1"/>
</dbReference>
<dbReference type="PROSITE" id="PS01244">
    <property type="entry name" value="ACONITASE_2"/>
    <property type="match status" value="1"/>
</dbReference>
<reference key="1">
    <citation type="journal article" date="2008" name="Proc. Natl. Acad. Sci. U.S.A.">
        <title>Niche adaptation and genome expansion in the chlorophyll d-producing cyanobacterium Acaryochloris marina.</title>
        <authorList>
            <person name="Swingley W.D."/>
            <person name="Chen M."/>
            <person name="Cheung P.C."/>
            <person name="Conrad A.L."/>
            <person name="Dejesa L.C."/>
            <person name="Hao J."/>
            <person name="Honchak B.M."/>
            <person name="Karbach L.E."/>
            <person name="Kurdoglu A."/>
            <person name="Lahiri S."/>
            <person name="Mastrian S.D."/>
            <person name="Miyashita H."/>
            <person name="Page L."/>
            <person name="Ramakrishna P."/>
            <person name="Satoh S."/>
            <person name="Sattley W.M."/>
            <person name="Shimada Y."/>
            <person name="Taylor H.L."/>
            <person name="Tomo T."/>
            <person name="Tsuchiya T."/>
            <person name="Wang Z.T."/>
            <person name="Raymond J."/>
            <person name="Mimuro M."/>
            <person name="Blankenship R.E."/>
            <person name="Touchman J.W."/>
        </authorList>
    </citation>
    <scope>NUCLEOTIDE SEQUENCE [LARGE SCALE GENOMIC DNA]</scope>
    <source>
        <strain>MBIC 11017</strain>
    </source>
</reference>
<name>LEUC_ACAM1</name>
<accession>B0CG35</accession>
<organism>
    <name type="scientific">Acaryochloris marina (strain MBIC 11017)</name>
    <dbReference type="NCBI Taxonomy" id="329726"/>
    <lineage>
        <taxon>Bacteria</taxon>
        <taxon>Bacillati</taxon>
        <taxon>Cyanobacteriota</taxon>
        <taxon>Cyanophyceae</taxon>
        <taxon>Acaryochloridales</taxon>
        <taxon>Acaryochloridaceae</taxon>
        <taxon>Acaryochloris</taxon>
    </lineage>
</organism>